<evidence type="ECO:0000255" key="1">
    <source>
        <dbReference type="HAMAP-Rule" id="MF_01595"/>
    </source>
</evidence>
<evidence type="ECO:0000256" key="2">
    <source>
        <dbReference type="SAM" id="MobiDB-lite"/>
    </source>
</evidence>
<keyword id="KW-0963">Cytoplasm</keyword>
<keyword id="KW-0460">Magnesium</keyword>
<keyword id="KW-0479">Metal-binding</keyword>
<keyword id="KW-0548">Nucleotidyltransferase</keyword>
<keyword id="KW-0694">RNA-binding</keyword>
<keyword id="KW-0808">Transferase</keyword>
<sequence length="745" mass="81002">MFDVQREELIWGDRKLVLETGKTARQADGSVVATYGETTVLATVVAGKEPKAGIDFLPLTVNYQERAYAAGRIPGGYFKREGRPSEKETLVSRLIDRPIRPLFVEGWRNDTQVVVTVLSHDLENDPDIVAMVAASAALTLSGVPFMGPIGAARVGYLNGGYKLNPLVTEIAESTLDLVVAGTQDAVLMVESEAKELSEDVMLGAVMFGHKHFQPVIEAIIRLAEKAAKEPRDFTPPENADVEAAVLAVAETELREAYKKTVKQERYAAVDAVKAKVVAALCPAEGEQKFSPEKVKAAFKEAQSKVVRWNILDTGSRIDGRDVKTVRSIVSEVGVLPRAHGSSLFTRGETQALVVATLGTGEDEQFIDALEGTYKERFLLHYNFPPYSVGETGRMGSPGRREIGHGKLAWRAIRPVLPPAHEFPYTIRVVSEITESNGSSSMASVCGGSLSLMDAGVPLRRPVAGIAMGLILEGERFAVLSDILGDEDHLGDMDFKVAGSEEGITSLQMDIKIAGITEEIMKIALAQAKDGRAHILGEMSKALTAARPELGEYAPRIETMQIPTDKIRDVIGTGGKIIREIVEKTGAKINIEDTGIVKIASSDGKAIKAAYNWIRSIVAEPEAGTIYDGTIVKIMEFGAFVNFFGAKDGLVHISELAAQRVAKVGDVVKEGQKVKVKFLGADERGKIRLSMKVVDQETGEDLTEKLKAERAERGEPEREERSDRGDRGDRGPRRDRGERRRESSGE</sequence>
<reference key="1">
    <citation type="submission" date="2008-12" db="EMBL/GenBank/DDBJ databases">
        <title>Complete sequence of chromosome of Methylobacterium chloromethanicum CM4.</title>
        <authorList>
            <consortium name="US DOE Joint Genome Institute"/>
            <person name="Lucas S."/>
            <person name="Copeland A."/>
            <person name="Lapidus A."/>
            <person name="Glavina del Rio T."/>
            <person name="Dalin E."/>
            <person name="Tice H."/>
            <person name="Bruce D."/>
            <person name="Goodwin L."/>
            <person name="Pitluck S."/>
            <person name="Chertkov O."/>
            <person name="Brettin T."/>
            <person name="Detter J.C."/>
            <person name="Han C."/>
            <person name="Larimer F."/>
            <person name="Land M."/>
            <person name="Hauser L."/>
            <person name="Kyrpides N."/>
            <person name="Mikhailova N."/>
            <person name="Marx C."/>
            <person name="Richardson P."/>
        </authorList>
    </citation>
    <scope>NUCLEOTIDE SEQUENCE [LARGE SCALE GENOMIC DNA]</scope>
    <source>
        <strain>CM4 / NCIMB 13688</strain>
    </source>
</reference>
<protein>
    <recommendedName>
        <fullName evidence="1">Polyribonucleotide nucleotidyltransferase</fullName>
        <ecNumber evidence="1">2.7.7.8</ecNumber>
    </recommendedName>
    <alternativeName>
        <fullName evidence="1">Polynucleotide phosphorylase</fullName>
        <shortName evidence="1">PNPase</shortName>
    </alternativeName>
</protein>
<gene>
    <name evidence="1" type="primary">pnp</name>
    <name type="ordered locus">Mchl_4396</name>
</gene>
<accession>B7KN55</accession>
<dbReference type="EC" id="2.7.7.8" evidence="1"/>
<dbReference type="EMBL" id="CP001298">
    <property type="protein sequence ID" value="ACK85172.1"/>
    <property type="molecule type" value="Genomic_DNA"/>
</dbReference>
<dbReference type="RefSeq" id="WP_003597551.1">
    <property type="nucleotide sequence ID" value="NC_011757.1"/>
</dbReference>
<dbReference type="SMR" id="B7KN55"/>
<dbReference type="KEGG" id="mch:Mchl_4396"/>
<dbReference type="HOGENOM" id="CLU_004217_2_2_5"/>
<dbReference type="Proteomes" id="UP000002385">
    <property type="component" value="Chromosome"/>
</dbReference>
<dbReference type="GO" id="GO:0005829">
    <property type="term" value="C:cytosol"/>
    <property type="evidence" value="ECO:0007669"/>
    <property type="project" value="TreeGrafter"/>
</dbReference>
<dbReference type="GO" id="GO:0000175">
    <property type="term" value="F:3'-5'-RNA exonuclease activity"/>
    <property type="evidence" value="ECO:0007669"/>
    <property type="project" value="TreeGrafter"/>
</dbReference>
<dbReference type="GO" id="GO:0000287">
    <property type="term" value="F:magnesium ion binding"/>
    <property type="evidence" value="ECO:0007669"/>
    <property type="project" value="UniProtKB-UniRule"/>
</dbReference>
<dbReference type="GO" id="GO:0004654">
    <property type="term" value="F:polyribonucleotide nucleotidyltransferase activity"/>
    <property type="evidence" value="ECO:0007669"/>
    <property type="project" value="UniProtKB-UniRule"/>
</dbReference>
<dbReference type="GO" id="GO:0003723">
    <property type="term" value="F:RNA binding"/>
    <property type="evidence" value="ECO:0007669"/>
    <property type="project" value="UniProtKB-UniRule"/>
</dbReference>
<dbReference type="GO" id="GO:0006402">
    <property type="term" value="P:mRNA catabolic process"/>
    <property type="evidence" value="ECO:0007669"/>
    <property type="project" value="UniProtKB-UniRule"/>
</dbReference>
<dbReference type="GO" id="GO:0006396">
    <property type="term" value="P:RNA processing"/>
    <property type="evidence" value="ECO:0007669"/>
    <property type="project" value="InterPro"/>
</dbReference>
<dbReference type="CDD" id="cd02393">
    <property type="entry name" value="KH-I_PNPase"/>
    <property type="match status" value="1"/>
</dbReference>
<dbReference type="CDD" id="cd11363">
    <property type="entry name" value="RNase_PH_PNPase_1"/>
    <property type="match status" value="1"/>
</dbReference>
<dbReference type="CDD" id="cd11364">
    <property type="entry name" value="RNase_PH_PNPase_2"/>
    <property type="match status" value="1"/>
</dbReference>
<dbReference type="CDD" id="cd04472">
    <property type="entry name" value="S1_PNPase"/>
    <property type="match status" value="1"/>
</dbReference>
<dbReference type="FunFam" id="2.40.50.140:FF:000107">
    <property type="entry name" value="Polyribonucleotide nucleotidyltransferase"/>
    <property type="match status" value="1"/>
</dbReference>
<dbReference type="FunFam" id="3.30.1370.10:FF:000001">
    <property type="entry name" value="Polyribonucleotide nucleotidyltransferase"/>
    <property type="match status" value="1"/>
</dbReference>
<dbReference type="FunFam" id="3.30.230.70:FF:000001">
    <property type="entry name" value="Polyribonucleotide nucleotidyltransferase"/>
    <property type="match status" value="1"/>
</dbReference>
<dbReference type="FunFam" id="3.30.230.70:FF:000002">
    <property type="entry name" value="Polyribonucleotide nucleotidyltransferase"/>
    <property type="match status" value="1"/>
</dbReference>
<dbReference type="Gene3D" id="3.30.230.70">
    <property type="entry name" value="GHMP Kinase, N-terminal domain"/>
    <property type="match status" value="2"/>
</dbReference>
<dbReference type="Gene3D" id="3.30.1370.10">
    <property type="entry name" value="K Homology domain, type 1"/>
    <property type="match status" value="1"/>
</dbReference>
<dbReference type="Gene3D" id="2.40.50.140">
    <property type="entry name" value="Nucleic acid-binding proteins"/>
    <property type="match status" value="1"/>
</dbReference>
<dbReference type="HAMAP" id="MF_01595">
    <property type="entry name" value="PNPase"/>
    <property type="match status" value="1"/>
</dbReference>
<dbReference type="InterPro" id="IPR001247">
    <property type="entry name" value="ExoRNase_PH_dom1"/>
</dbReference>
<dbReference type="InterPro" id="IPR015847">
    <property type="entry name" value="ExoRNase_PH_dom2"/>
</dbReference>
<dbReference type="InterPro" id="IPR036345">
    <property type="entry name" value="ExoRNase_PH_dom2_sf"/>
</dbReference>
<dbReference type="InterPro" id="IPR004087">
    <property type="entry name" value="KH_dom"/>
</dbReference>
<dbReference type="InterPro" id="IPR004088">
    <property type="entry name" value="KH_dom_type_1"/>
</dbReference>
<dbReference type="InterPro" id="IPR036612">
    <property type="entry name" value="KH_dom_type_1_sf"/>
</dbReference>
<dbReference type="InterPro" id="IPR012340">
    <property type="entry name" value="NA-bd_OB-fold"/>
</dbReference>
<dbReference type="InterPro" id="IPR012162">
    <property type="entry name" value="PNPase"/>
</dbReference>
<dbReference type="InterPro" id="IPR027408">
    <property type="entry name" value="PNPase/RNase_PH_dom_sf"/>
</dbReference>
<dbReference type="InterPro" id="IPR015848">
    <property type="entry name" value="PNPase_PH_RNA-bd_bac/org-type"/>
</dbReference>
<dbReference type="InterPro" id="IPR020568">
    <property type="entry name" value="Ribosomal_Su5_D2-typ_SF"/>
</dbReference>
<dbReference type="InterPro" id="IPR003029">
    <property type="entry name" value="S1_domain"/>
</dbReference>
<dbReference type="NCBIfam" id="TIGR03591">
    <property type="entry name" value="polynuc_phos"/>
    <property type="match status" value="1"/>
</dbReference>
<dbReference type="NCBIfam" id="NF008805">
    <property type="entry name" value="PRK11824.1"/>
    <property type="match status" value="1"/>
</dbReference>
<dbReference type="PANTHER" id="PTHR11252">
    <property type="entry name" value="POLYRIBONUCLEOTIDE NUCLEOTIDYLTRANSFERASE"/>
    <property type="match status" value="1"/>
</dbReference>
<dbReference type="PANTHER" id="PTHR11252:SF0">
    <property type="entry name" value="POLYRIBONUCLEOTIDE NUCLEOTIDYLTRANSFERASE 1, MITOCHONDRIAL"/>
    <property type="match status" value="1"/>
</dbReference>
<dbReference type="Pfam" id="PF00013">
    <property type="entry name" value="KH_1"/>
    <property type="match status" value="1"/>
</dbReference>
<dbReference type="Pfam" id="PF03726">
    <property type="entry name" value="PNPase"/>
    <property type="match status" value="1"/>
</dbReference>
<dbReference type="Pfam" id="PF01138">
    <property type="entry name" value="RNase_PH"/>
    <property type="match status" value="2"/>
</dbReference>
<dbReference type="Pfam" id="PF03725">
    <property type="entry name" value="RNase_PH_C"/>
    <property type="match status" value="2"/>
</dbReference>
<dbReference type="Pfam" id="PF00575">
    <property type="entry name" value="S1"/>
    <property type="match status" value="1"/>
</dbReference>
<dbReference type="PIRSF" id="PIRSF005499">
    <property type="entry name" value="PNPase"/>
    <property type="match status" value="1"/>
</dbReference>
<dbReference type="SMART" id="SM00322">
    <property type="entry name" value="KH"/>
    <property type="match status" value="1"/>
</dbReference>
<dbReference type="SMART" id="SM00316">
    <property type="entry name" value="S1"/>
    <property type="match status" value="1"/>
</dbReference>
<dbReference type="SUPFAM" id="SSF54791">
    <property type="entry name" value="Eukaryotic type KH-domain (KH-domain type I)"/>
    <property type="match status" value="1"/>
</dbReference>
<dbReference type="SUPFAM" id="SSF50249">
    <property type="entry name" value="Nucleic acid-binding proteins"/>
    <property type="match status" value="1"/>
</dbReference>
<dbReference type="SUPFAM" id="SSF55666">
    <property type="entry name" value="Ribonuclease PH domain 2-like"/>
    <property type="match status" value="2"/>
</dbReference>
<dbReference type="SUPFAM" id="SSF54211">
    <property type="entry name" value="Ribosomal protein S5 domain 2-like"/>
    <property type="match status" value="2"/>
</dbReference>
<dbReference type="PROSITE" id="PS50084">
    <property type="entry name" value="KH_TYPE_1"/>
    <property type="match status" value="1"/>
</dbReference>
<dbReference type="PROSITE" id="PS50126">
    <property type="entry name" value="S1"/>
    <property type="match status" value="1"/>
</dbReference>
<name>PNP_METC4</name>
<feature type="chain" id="PRO_1000185743" description="Polyribonucleotide nucleotidyltransferase">
    <location>
        <begin position="1"/>
        <end position="745"/>
    </location>
</feature>
<feature type="domain" description="KH" evidence="1">
    <location>
        <begin position="554"/>
        <end position="613"/>
    </location>
</feature>
<feature type="domain" description="S1 motif" evidence="1">
    <location>
        <begin position="623"/>
        <end position="691"/>
    </location>
</feature>
<feature type="region of interest" description="Disordered" evidence="2">
    <location>
        <begin position="695"/>
        <end position="745"/>
    </location>
</feature>
<feature type="compositionally biased region" description="Basic and acidic residues" evidence="2">
    <location>
        <begin position="701"/>
        <end position="745"/>
    </location>
</feature>
<feature type="binding site" evidence="1">
    <location>
        <position position="487"/>
    </location>
    <ligand>
        <name>Mg(2+)</name>
        <dbReference type="ChEBI" id="CHEBI:18420"/>
    </ligand>
</feature>
<feature type="binding site" evidence="1">
    <location>
        <position position="493"/>
    </location>
    <ligand>
        <name>Mg(2+)</name>
        <dbReference type="ChEBI" id="CHEBI:18420"/>
    </ligand>
</feature>
<proteinExistence type="inferred from homology"/>
<comment type="function">
    <text evidence="1">Involved in mRNA degradation. Catalyzes the phosphorolysis of single-stranded polyribonucleotides processively in the 3'- to 5'-direction.</text>
</comment>
<comment type="catalytic activity">
    <reaction evidence="1">
        <text>RNA(n+1) + phosphate = RNA(n) + a ribonucleoside 5'-diphosphate</text>
        <dbReference type="Rhea" id="RHEA:22096"/>
        <dbReference type="Rhea" id="RHEA-COMP:14527"/>
        <dbReference type="Rhea" id="RHEA-COMP:17342"/>
        <dbReference type="ChEBI" id="CHEBI:43474"/>
        <dbReference type="ChEBI" id="CHEBI:57930"/>
        <dbReference type="ChEBI" id="CHEBI:140395"/>
        <dbReference type="EC" id="2.7.7.8"/>
    </reaction>
</comment>
<comment type="cofactor">
    <cofactor evidence="1">
        <name>Mg(2+)</name>
        <dbReference type="ChEBI" id="CHEBI:18420"/>
    </cofactor>
</comment>
<comment type="subcellular location">
    <subcellularLocation>
        <location evidence="1">Cytoplasm</location>
    </subcellularLocation>
</comment>
<comment type="similarity">
    <text evidence="1">Belongs to the polyribonucleotide nucleotidyltransferase family.</text>
</comment>
<organism>
    <name type="scientific">Methylorubrum extorquens (strain CM4 / NCIMB 13688)</name>
    <name type="common">Methylobacterium extorquens</name>
    <dbReference type="NCBI Taxonomy" id="440085"/>
    <lineage>
        <taxon>Bacteria</taxon>
        <taxon>Pseudomonadati</taxon>
        <taxon>Pseudomonadota</taxon>
        <taxon>Alphaproteobacteria</taxon>
        <taxon>Hyphomicrobiales</taxon>
        <taxon>Methylobacteriaceae</taxon>
        <taxon>Methylorubrum</taxon>
    </lineage>
</organism>